<feature type="chain" id="PRO_0000239172" description="DEAD-box ATP-dependent RNA helicase 32">
    <location>
        <begin position="1"/>
        <end position="739"/>
    </location>
</feature>
<feature type="domain" description="Helicase ATP-binding" evidence="2">
    <location>
        <begin position="102"/>
        <end position="277"/>
    </location>
</feature>
<feature type="domain" description="Helicase C-terminal" evidence="3">
    <location>
        <begin position="303"/>
        <end position="461"/>
    </location>
</feature>
<feature type="region of interest" description="Disordered" evidence="4">
    <location>
        <begin position="656"/>
        <end position="725"/>
    </location>
</feature>
<feature type="coiled-coil region" evidence="1">
    <location>
        <begin position="643"/>
        <end position="689"/>
    </location>
</feature>
<feature type="short sequence motif" description="Q motif">
    <location>
        <begin position="71"/>
        <end position="99"/>
    </location>
</feature>
<feature type="short sequence motif" description="DEAD box">
    <location>
        <begin position="225"/>
        <end position="228"/>
    </location>
</feature>
<feature type="compositionally biased region" description="Basic residues" evidence="4">
    <location>
        <begin position="661"/>
        <end position="674"/>
    </location>
</feature>
<feature type="compositionally biased region" description="Acidic residues" evidence="4">
    <location>
        <begin position="678"/>
        <end position="688"/>
    </location>
</feature>
<feature type="binding site" evidence="2">
    <location>
        <begin position="115"/>
        <end position="122"/>
    </location>
    <ligand>
        <name>ATP</name>
        <dbReference type="ChEBI" id="CHEBI:30616"/>
    </ligand>
</feature>
<sequence length="739" mass="83582">MVKIKKTKGMRKQIRLNEVEEINLLKQWIESQKPDSGFNPLSLRPLPKDSKIGKSEDGKNGTVFSRYAGVRKFAQLPISDKTKRGLKDAKYVDMTDVQSAAIPHALCGRDILGAARTGSGKTLAFVIPILEKLHRERWSPEDGVGCIIISPTRELAAQTFGVLNKVGKFHKFSAGLLIGGREGVDVEKERVHEMNILVCAPGRLLQHMDETPNFECPQLQILILDEADRVLDSAFKGQLDPIISQLPKHRQTLLFSATQTKKVKDLARLSLRDPEYISVHAEAVTATPTSLMQTVMIVPVEKKLDMLWSFIKTHLNSRILVFLSTKKQVKFVHEAFNKLRPGIPLKSLHGKMSQEKRMGVYSQFIERQSVLFCTDVLARGLDFDKAVDWVVQVDCPEDVASYIHRVGRTARFYTQGKSLLFLTPSEEKMIEKLQEAKVPIKLIKANNQKLQEVSRLLAALLVKYPDLQGVAQRAFITYLRSIHKRRDKEIFDVSKLSIENFSASLGLPMTPRIRFTNLKTKKKGVYESSIAMEIENAQEYEAPLVVKKDLLGEDLEEEDFALKPRKEGKVVEKSTKEEEVLIPGNRVLKNKKLKINLHRPFGSRVVLDEEGNSLAPLASVAAEAGTEVALDEERMNDYYKKVGAEMRKADIEDKKVDKERRREKRMKQKIKRKRGAMEDEEEEEEEDHDGSGSSDDETGRNSKRAKKIVSDNEENGGKINTDSLSVADLEEMALKFITQ</sequence>
<accession>Q9FFT9</accession>
<dbReference type="EC" id="3.6.4.13"/>
<dbReference type="EMBL" id="AB005232">
    <property type="protein sequence ID" value="BAB08770.1"/>
    <property type="molecule type" value="Genomic_DNA"/>
</dbReference>
<dbReference type="EMBL" id="CP002688">
    <property type="protein sequence ID" value="AED96555.1"/>
    <property type="molecule type" value="Genomic_DNA"/>
</dbReference>
<dbReference type="RefSeq" id="NP_200302.1">
    <property type="nucleotide sequence ID" value="NM_124873.3"/>
</dbReference>
<dbReference type="SMR" id="Q9FFT9"/>
<dbReference type="FunCoup" id="Q9FFT9">
    <property type="interactions" value="4137"/>
</dbReference>
<dbReference type="STRING" id="3702.Q9FFT9"/>
<dbReference type="iPTMnet" id="Q9FFT9"/>
<dbReference type="PaxDb" id="3702-AT5G54910.1"/>
<dbReference type="ProteomicsDB" id="236171"/>
<dbReference type="EnsemblPlants" id="AT5G54910.1">
    <property type="protein sequence ID" value="AT5G54910.1"/>
    <property type="gene ID" value="AT5G54910"/>
</dbReference>
<dbReference type="GeneID" id="835582"/>
<dbReference type="Gramene" id="AT5G54910.1">
    <property type="protein sequence ID" value="AT5G54910.1"/>
    <property type="gene ID" value="AT5G54910"/>
</dbReference>
<dbReference type="KEGG" id="ath:AT5G54910"/>
<dbReference type="Araport" id="AT5G54910"/>
<dbReference type="TAIR" id="AT5G54910"/>
<dbReference type="eggNOG" id="KOG0343">
    <property type="taxonomic scope" value="Eukaryota"/>
</dbReference>
<dbReference type="HOGENOM" id="CLU_003041_26_1_1"/>
<dbReference type="InParanoid" id="Q9FFT9"/>
<dbReference type="OMA" id="KFHKFSA"/>
<dbReference type="PhylomeDB" id="Q9FFT9"/>
<dbReference type="CD-CODE" id="4299E36E">
    <property type="entry name" value="Nucleolus"/>
</dbReference>
<dbReference type="PRO" id="PR:Q9FFT9"/>
<dbReference type="Proteomes" id="UP000006548">
    <property type="component" value="Chromosome 5"/>
</dbReference>
<dbReference type="ExpressionAtlas" id="Q9FFT9">
    <property type="expression patterns" value="baseline and differential"/>
</dbReference>
<dbReference type="GO" id="GO:0005730">
    <property type="term" value="C:nucleolus"/>
    <property type="evidence" value="ECO:0007005"/>
    <property type="project" value="TAIR"/>
</dbReference>
<dbReference type="GO" id="GO:0005524">
    <property type="term" value="F:ATP binding"/>
    <property type="evidence" value="ECO:0007669"/>
    <property type="project" value="UniProtKB-KW"/>
</dbReference>
<dbReference type="GO" id="GO:0016887">
    <property type="term" value="F:ATP hydrolysis activity"/>
    <property type="evidence" value="ECO:0007669"/>
    <property type="project" value="RHEA"/>
</dbReference>
<dbReference type="GO" id="GO:0003723">
    <property type="term" value="F:RNA binding"/>
    <property type="evidence" value="ECO:0007669"/>
    <property type="project" value="UniProtKB-KW"/>
</dbReference>
<dbReference type="GO" id="GO:0003724">
    <property type="term" value="F:RNA helicase activity"/>
    <property type="evidence" value="ECO:0007669"/>
    <property type="project" value="UniProtKB-EC"/>
</dbReference>
<dbReference type="CDD" id="cd17941">
    <property type="entry name" value="DEADc_DDX10"/>
    <property type="match status" value="1"/>
</dbReference>
<dbReference type="CDD" id="cd18787">
    <property type="entry name" value="SF2_C_DEAD"/>
    <property type="match status" value="1"/>
</dbReference>
<dbReference type="FunFam" id="3.40.50.300:FF:001089">
    <property type="entry name" value="RNA helicase"/>
    <property type="match status" value="1"/>
</dbReference>
<dbReference type="FunFam" id="3.40.50.300:FF:003373">
    <property type="entry name" value="RNA helicase"/>
    <property type="match status" value="1"/>
</dbReference>
<dbReference type="Gene3D" id="3.40.50.300">
    <property type="entry name" value="P-loop containing nucleotide triphosphate hydrolases"/>
    <property type="match status" value="2"/>
</dbReference>
<dbReference type="InterPro" id="IPR011545">
    <property type="entry name" value="DEAD/DEAH_box_helicase_dom"/>
</dbReference>
<dbReference type="InterPro" id="IPR014001">
    <property type="entry name" value="Helicase_ATP-bd"/>
</dbReference>
<dbReference type="InterPro" id="IPR001650">
    <property type="entry name" value="Helicase_C-like"/>
</dbReference>
<dbReference type="InterPro" id="IPR027417">
    <property type="entry name" value="P-loop_NTPase"/>
</dbReference>
<dbReference type="InterPro" id="IPR000629">
    <property type="entry name" value="RNA-helicase_DEAD-box_CS"/>
</dbReference>
<dbReference type="InterPro" id="IPR014014">
    <property type="entry name" value="RNA_helicase_DEAD_Q_motif"/>
</dbReference>
<dbReference type="InterPro" id="IPR025313">
    <property type="entry name" value="SPB4-like_CTE"/>
</dbReference>
<dbReference type="PANTHER" id="PTHR24031">
    <property type="entry name" value="RNA HELICASE"/>
    <property type="match status" value="1"/>
</dbReference>
<dbReference type="Pfam" id="PF13959">
    <property type="entry name" value="CTE_SPB4"/>
    <property type="match status" value="1"/>
</dbReference>
<dbReference type="Pfam" id="PF00270">
    <property type="entry name" value="DEAD"/>
    <property type="match status" value="1"/>
</dbReference>
<dbReference type="Pfam" id="PF00271">
    <property type="entry name" value="Helicase_C"/>
    <property type="match status" value="1"/>
</dbReference>
<dbReference type="SMART" id="SM00487">
    <property type="entry name" value="DEXDc"/>
    <property type="match status" value="1"/>
</dbReference>
<dbReference type="SMART" id="SM01178">
    <property type="entry name" value="DUF4217"/>
    <property type="match status" value="1"/>
</dbReference>
<dbReference type="SMART" id="SM00490">
    <property type="entry name" value="HELICc"/>
    <property type="match status" value="1"/>
</dbReference>
<dbReference type="SUPFAM" id="SSF52540">
    <property type="entry name" value="P-loop containing nucleoside triphosphate hydrolases"/>
    <property type="match status" value="2"/>
</dbReference>
<dbReference type="PROSITE" id="PS00039">
    <property type="entry name" value="DEAD_ATP_HELICASE"/>
    <property type="match status" value="1"/>
</dbReference>
<dbReference type="PROSITE" id="PS51192">
    <property type="entry name" value="HELICASE_ATP_BIND_1"/>
    <property type="match status" value="1"/>
</dbReference>
<dbReference type="PROSITE" id="PS51194">
    <property type="entry name" value="HELICASE_CTER"/>
    <property type="match status" value="1"/>
</dbReference>
<dbReference type="PROSITE" id="PS51195">
    <property type="entry name" value="Q_MOTIF"/>
    <property type="match status" value="1"/>
</dbReference>
<name>RH32_ARATH</name>
<comment type="catalytic activity">
    <reaction>
        <text>ATP + H2O = ADP + phosphate + H(+)</text>
        <dbReference type="Rhea" id="RHEA:13065"/>
        <dbReference type="ChEBI" id="CHEBI:15377"/>
        <dbReference type="ChEBI" id="CHEBI:15378"/>
        <dbReference type="ChEBI" id="CHEBI:30616"/>
        <dbReference type="ChEBI" id="CHEBI:43474"/>
        <dbReference type="ChEBI" id="CHEBI:456216"/>
        <dbReference type="EC" id="3.6.4.13"/>
    </reaction>
</comment>
<comment type="domain">
    <text>The Q motif is unique to and characteristic of the DEAD box family of RNA helicases and controls ATP binding and hydrolysis.</text>
</comment>
<comment type="similarity">
    <text evidence="5">Belongs to the DEAD box helicase family. DDX10/DBP4 subfamily.</text>
</comment>
<keyword id="KW-0067">ATP-binding</keyword>
<keyword id="KW-0175">Coiled coil</keyword>
<keyword id="KW-0347">Helicase</keyword>
<keyword id="KW-0378">Hydrolase</keyword>
<keyword id="KW-0547">Nucleotide-binding</keyword>
<keyword id="KW-1185">Reference proteome</keyword>
<keyword id="KW-0694">RNA-binding</keyword>
<protein>
    <recommendedName>
        <fullName>DEAD-box ATP-dependent RNA helicase 32</fullName>
        <ecNumber>3.6.4.13</ecNumber>
    </recommendedName>
</protein>
<organism>
    <name type="scientific">Arabidopsis thaliana</name>
    <name type="common">Mouse-ear cress</name>
    <dbReference type="NCBI Taxonomy" id="3702"/>
    <lineage>
        <taxon>Eukaryota</taxon>
        <taxon>Viridiplantae</taxon>
        <taxon>Streptophyta</taxon>
        <taxon>Embryophyta</taxon>
        <taxon>Tracheophyta</taxon>
        <taxon>Spermatophyta</taxon>
        <taxon>Magnoliopsida</taxon>
        <taxon>eudicotyledons</taxon>
        <taxon>Gunneridae</taxon>
        <taxon>Pentapetalae</taxon>
        <taxon>rosids</taxon>
        <taxon>malvids</taxon>
        <taxon>Brassicales</taxon>
        <taxon>Brassicaceae</taxon>
        <taxon>Camelineae</taxon>
        <taxon>Arabidopsis</taxon>
    </lineage>
</organism>
<proteinExistence type="evidence at transcript level"/>
<evidence type="ECO:0000255" key="1"/>
<evidence type="ECO:0000255" key="2">
    <source>
        <dbReference type="PROSITE-ProRule" id="PRU00541"/>
    </source>
</evidence>
<evidence type="ECO:0000255" key="3">
    <source>
        <dbReference type="PROSITE-ProRule" id="PRU00542"/>
    </source>
</evidence>
<evidence type="ECO:0000256" key="4">
    <source>
        <dbReference type="SAM" id="MobiDB-lite"/>
    </source>
</evidence>
<evidence type="ECO:0000305" key="5"/>
<reference key="1">
    <citation type="journal article" date="1997" name="DNA Res.">
        <title>Structural analysis of Arabidopsis thaliana chromosome 5. I. Sequence features of the 1.6 Mb regions covered by twenty physically assigned P1 clones.</title>
        <authorList>
            <person name="Sato S."/>
            <person name="Kotani H."/>
            <person name="Nakamura Y."/>
            <person name="Kaneko T."/>
            <person name="Asamizu E."/>
            <person name="Fukami M."/>
            <person name="Miyajima N."/>
            <person name="Tabata S."/>
        </authorList>
    </citation>
    <scope>NUCLEOTIDE SEQUENCE [LARGE SCALE GENOMIC DNA]</scope>
    <source>
        <strain>cv. Columbia</strain>
    </source>
</reference>
<reference key="2">
    <citation type="journal article" date="2017" name="Plant J.">
        <title>Araport11: a complete reannotation of the Arabidopsis thaliana reference genome.</title>
        <authorList>
            <person name="Cheng C.Y."/>
            <person name="Krishnakumar V."/>
            <person name="Chan A.P."/>
            <person name="Thibaud-Nissen F."/>
            <person name="Schobel S."/>
            <person name="Town C.D."/>
        </authorList>
    </citation>
    <scope>GENOME REANNOTATION</scope>
    <source>
        <strain>cv. Columbia</strain>
    </source>
</reference>
<reference key="3">
    <citation type="journal article" date="2004" name="Plant Biotechnol. J.">
        <title>DEAD-box RNA helicases in Arabidopsis thaliana: establishing a link between quantitative expression, gene structure and evolution of a family of genes.</title>
        <authorList>
            <person name="Mingam A."/>
            <person name="Toffano-Nioche C."/>
            <person name="Brunaud V."/>
            <person name="Boudet N."/>
            <person name="Kreis M."/>
            <person name="Lecharny A."/>
        </authorList>
    </citation>
    <scope>GENE FAMILY</scope>
    <scope>NOMENCLATURE</scope>
</reference>
<reference key="4">
    <citation type="journal article" date="2013" name="PLoS ONE">
        <title>Genome-wide comparative in silico analysis of the RNA helicase gene family in Zea mays and Glycine max: a comparison with Arabidopsis and Oryza sativa.</title>
        <authorList>
            <person name="Xu R."/>
            <person name="Zhang S."/>
            <person name="Huang J."/>
            <person name="Zheng C."/>
        </authorList>
    </citation>
    <scope>GENE FAMILY</scope>
</reference>
<gene>
    <name type="primary">RH32</name>
    <name type="ordered locus">At5g54910</name>
    <name type="ORF">MBG8.18</name>
</gene>